<comment type="function">
    <text evidence="5">Transcription factor that binds specifically to the DRE (dual repressor element) and represses HTR1A gene transcription in neuronal cells.</text>
</comment>
<comment type="subunit">
    <text evidence="1">Interacts with CHMP4B.</text>
</comment>
<comment type="subcellular location">
    <subcellularLocation>
        <location evidence="5">Nucleus</location>
    </subcellularLocation>
</comment>
<comment type="similarity">
    <text evidence="6">Belongs to the CC2D1 family.</text>
</comment>
<dbReference type="EMBL" id="AK043839">
    <property type="protein sequence ID" value="BAC31675.1"/>
    <property type="molecule type" value="mRNA"/>
</dbReference>
<dbReference type="EMBL" id="AK146601">
    <property type="protein sequence ID" value="BAE27295.1"/>
    <property type="molecule type" value="mRNA"/>
</dbReference>
<dbReference type="EMBL" id="AL626783">
    <property type="status" value="NOT_ANNOTATED_CDS"/>
    <property type="molecule type" value="Genomic_DNA"/>
</dbReference>
<dbReference type="EMBL" id="BC125517">
    <property type="protein sequence ID" value="AAI25518.1"/>
    <property type="molecule type" value="mRNA"/>
</dbReference>
<dbReference type="EMBL" id="BC137743">
    <property type="protein sequence ID" value="AAI37744.1"/>
    <property type="molecule type" value="mRNA"/>
</dbReference>
<dbReference type="EMBL" id="AK173271">
    <property type="protein sequence ID" value="BAD32549.1"/>
    <property type="molecule type" value="mRNA"/>
</dbReference>
<dbReference type="CCDS" id="CCDS18454.1"/>
<dbReference type="RefSeq" id="NP_796019.1">
    <property type="nucleotide sequence ID" value="NM_177045.3"/>
</dbReference>
<dbReference type="SMR" id="Q8BRN9"/>
<dbReference type="BioGRID" id="235657">
    <property type="interactions" value="4"/>
</dbReference>
<dbReference type="FunCoup" id="Q8BRN9">
    <property type="interactions" value="4847"/>
</dbReference>
<dbReference type="STRING" id="10090.ENSMUSP00000030320"/>
<dbReference type="GlyGen" id="Q8BRN9">
    <property type="glycosylation" value="1 site"/>
</dbReference>
<dbReference type="iPTMnet" id="Q8BRN9"/>
<dbReference type="PhosphoSitePlus" id="Q8BRN9"/>
<dbReference type="SwissPalm" id="Q8BRN9"/>
<dbReference type="jPOST" id="Q8BRN9"/>
<dbReference type="PaxDb" id="10090-ENSMUSP00000030320"/>
<dbReference type="PeptideAtlas" id="Q8BRN9"/>
<dbReference type="ProteomicsDB" id="273809"/>
<dbReference type="Pumba" id="Q8BRN9"/>
<dbReference type="Antibodypedia" id="33001">
    <property type="antibodies" value="63 antibodies from 21 providers"/>
</dbReference>
<dbReference type="Ensembl" id="ENSMUST00000030320.13">
    <property type="protein sequence ID" value="ENSMUSP00000030320.7"/>
    <property type="gene ID" value="ENSMUSG00000028582.15"/>
</dbReference>
<dbReference type="GeneID" id="319965"/>
<dbReference type="KEGG" id="mmu:319965"/>
<dbReference type="UCSC" id="uc008ubl.1">
    <property type="organism name" value="mouse"/>
</dbReference>
<dbReference type="AGR" id="MGI:2443076"/>
<dbReference type="CTD" id="200014"/>
<dbReference type="MGI" id="MGI:2443076">
    <property type="gene designation" value="Cc2d1b"/>
</dbReference>
<dbReference type="VEuPathDB" id="HostDB:ENSMUSG00000028582"/>
<dbReference type="eggNOG" id="KOG3837">
    <property type="taxonomic scope" value="Eukaryota"/>
</dbReference>
<dbReference type="GeneTree" id="ENSGT00390000009595"/>
<dbReference type="InParanoid" id="Q8BRN9"/>
<dbReference type="OMA" id="NNNCPEY"/>
<dbReference type="OrthoDB" id="19996at2759"/>
<dbReference type="PhylomeDB" id="Q8BRN9"/>
<dbReference type="TreeFam" id="TF314229"/>
<dbReference type="Reactome" id="R-MMU-9668328">
    <property type="pathway name" value="Sealing of the nuclear envelope (NE) by ESCRT-III"/>
</dbReference>
<dbReference type="BioGRID-ORCS" id="319965">
    <property type="hits" value="3 hits in 79 CRISPR screens"/>
</dbReference>
<dbReference type="ChiTaRS" id="Cc2d1b">
    <property type="organism name" value="mouse"/>
</dbReference>
<dbReference type="PRO" id="PR:Q8BRN9"/>
<dbReference type="Proteomes" id="UP000000589">
    <property type="component" value="Chromosome 4"/>
</dbReference>
<dbReference type="RNAct" id="Q8BRN9">
    <property type="molecule type" value="protein"/>
</dbReference>
<dbReference type="Bgee" id="ENSMUSG00000028582">
    <property type="expression patterns" value="Expressed in humerus cartilage element and 230 other cell types or tissues"/>
</dbReference>
<dbReference type="ExpressionAtlas" id="Q8BRN9">
    <property type="expression patterns" value="baseline and differential"/>
</dbReference>
<dbReference type="GO" id="GO:0005829">
    <property type="term" value="C:cytosol"/>
    <property type="evidence" value="ECO:0000314"/>
    <property type="project" value="MGI"/>
</dbReference>
<dbReference type="GO" id="GO:0010008">
    <property type="term" value="C:endosome membrane"/>
    <property type="evidence" value="ECO:0000314"/>
    <property type="project" value="MGI"/>
</dbReference>
<dbReference type="GO" id="GO:0005654">
    <property type="term" value="C:nucleoplasm"/>
    <property type="evidence" value="ECO:0007669"/>
    <property type="project" value="Ensembl"/>
</dbReference>
<dbReference type="GO" id="GO:0005634">
    <property type="term" value="C:nucleus"/>
    <property type="evidence" value="ECO:0000266"/>
    <property type="project" value="MGI"/>
</dbReference>
<dbReference type="GO" id="GO:0001227">
    <property type="term" value="F:DNA-binding transcription repressor activity, RNA polymerase II-specific"/>
    <property type="evidence" value="ECO:0000314"/>
    <property type="project" value="MGI"/>
</dbReference>
<dbReference type="GO" id="GO:0000978">
    <property type="term" value="F:RNA polymerase II cis-regulatory region sequence-specific DNA binding"/>
    <property type="evidence" value="ECO:0000314"/>
    <property type="project" value="MGI"/>
</dbReference>
<dbReference type="GO" id="GO:0000122">
    <property type="term" value="P:negative regulation of transcription by RNA polymerase II"/>
    <property type="evidence" value="ECO:0000314"/>
    <property type="project" value="MGI"/>
</dbReference>
<dbReference type="CDD" id="cd08690">
    <property type="entry name" value="C2_Freud-1"/>
    <property type="match status" value="1"/>
</dbReference>
<dbReference type="FunFam" id="2.60.40.150:FF:000104">
    <property type="entry name" value="coiled-coil and C2 domain-containing protein 1B"/>
    <property type="match status" value="1"/>
</dbReference>
<dbReference type="Gene3D" id="2.60.40.150">
    <property type="entry name" value="C2 domain"/>
    <property type="match status" value="1"/>
</dbReference>
<dbReference type="InterPro" id="IPR000008">
    <property type="entry name" value="C2_dom"/>
</dbReference>
<dbReference type="InterPro" id="IPR035892">
    <property type="entry name" value="C2_domain_sf"/>
</dbReference>
<dbReference type="InterPro" id="IPR037772">
    <property type="entry name" value="C2_Freud"/>
</dbReference>
<dbReference type="InterPro" id="IPR039725">
    <property type="entry name" value="CC2D1A/B"/>
</dbReference>
<dbReference type="InterPro" id="IPR006608">
    <property type="entry name" value="CC2D1A/B_DM14"/>
</dbReference>
<dbReference type="PANTHER" id="PTHR13076">
    <property type="entry name" value="COILED-COIL AND C2 DOMAIN-CONTAINING PROTEIN 1-LIKE"/>
    <property type="match status" value="1"/>
</dbReference>
<dbReference type="PANTHER" id="PTHR13076:SF5">
    <property type="entry name" value="COILED-COIL AND C2 DOMAIN-CONTAINING PROTEIN 1B"/>
    <property type="match status" value="1"/>
</dbReference>
<dbReference type="Pfam" id="PF00168">
    <property type="entry name" value="C2"/>
    <property type="match status" value="1"/>
</dbReference>
<dbReference type="Pfam" id="PF21528">
    <property type="entry name" value="CC2D1A-B_DM14"/>
    <property type="match status" value="4"/>
</dbReference>
<dbReference type="SMART" id="SM00239">
    <property type="entry name" value="C2"/>
    <property type="match status" value="1"/>
</dbReference>
<dbReference type="SMART" id="SM00685">
    <property type="entry name" value="DM14"/>
    <property type="match status" value="4"/>
</dbReference>
<dbReference type="SUPFAM" id="SSF49562">
    <property type="entry name" value="C2 domain (Calcium/lipid-binding domain, CaLB)"/>
    <property type="match status" value="1"/>
</dbReference>
<dbReference type="PROSITE" id="PS50004">
    <property type="entry name" value="C2"/>
    <property type="match status" value="1"/>
</dbReference>
<reference key="1">
    <citation type="journal article" date="2005" name="Science">
        <title>The transcriptional landscape of the mammalian genome.</title>
        <authorList>
            <person name="Carninci P."/>
            <person name="Kasukawa T."/>
            <person name="Katayama S."/>
            <person name="Gough J."/>
            <person name="Frith M.C."/>
            <person name="Maeda N."/>
            <person name="Oyama R."/>
            <person name="Ravasi T."/>
            <person name="Lenhard B."/>
            <person name="Wells C."/>
            <person name="Kodzius R."/>
            <person name="Shimokawa K."/>
            <person name="Bajic V.B."/>
            <person name="Brenner S.E."/>
            <person name="Batalov S."/>
            <person name="Forrest A.R."/>
            <person name="Zavolan M."/>
            <person name="Davis M.J."/>
            <person name="Wilming L.G."/>
            <person name="Aidinis V."/>
            <person name="Allen J.E."/>
            <person name="Ambesi-Impiombato A."/>
            <person name="Apweiler R."/>
            <person name="Aturaliya R.N."/>
            <person name="Bailey T.L."/>
            <person name="Bansal M."/>
            <person name="Baxter L."/>
            <person name="Beisel K.W."/>
            <person name="Bersano T."/>
            <person name="Bono H."/>
            <person name="Chalk A.M."/>
            <person name="Chiu K.P."/>
            <person name="Choudhary V."/>
            <person name="Christoffels A."/>
            <person name="Clutterbuck D.R."/>
            <person name="Crowe M.L."/>
            <person name="Dalla E."/>
            <person name="Dalrymple B.P."/>
            <person name="de Bono B."/>
            <person name="Della Gatta G."/>
            <person name="di Bernardo D."/>
            <person name="Down T."/>
            <person name="Engstrom P."/>
            <person name="Fagiolini M."/>
            <person name="Faulkner G."/>
            <person name="Fletcher C.F."/>
            <person name="Fukushima T."/>
            <person name="Furuno M."/>
            <person name="Futaki S."/>
            <person name="Gariboldi M."/>
            <person name="Georgii-Hemming P."/>
            <person name="Gingeras T.R."/>
            <person name="Gojobori T."/>
            <person name="Green R.E."/>
            <person name="Gustincich S."/>
            <person name="Harbers M."/>
            <person name="Hayashi Y."/>
            <person name="Hensch T.K."/>
            <person name="Hirokawa N."/>
            <person name="Hill D."/>
            <person name="Huminiecki L."/>
            <person name="Iacono M."/>
            <person name="Ikeo K."/>
            <person name="Iwama A."/>
            <person name="Ishikawa T."/>
            <person name="Jakt M."/>
            <person name="Kanapin A."/>
            <person name="Katoh M."/>
            <person name="Kawasawa Y."/>
            <person name="Kelso J."/>
            <person name="Kitamura H."/>
            <person name="Kitano H."/>
            <person name="Kollias G."/>
            <person name="Krishnan S.P."/>
            <person name="Kruger A."/>
            <person name="Kummerfeld S.K."/>
            <person name="Kurochkin I.V."/>
            <person name="Lareau L.F."/>
            <person name="Lazarevic D."/>
            <person name="Lipovich L."/>
            <person name="Liu J."/>
            <person name="Liuni S."/>
            <person name="McWilliam S."/>
            <person name="Madan Babu M."/>
            <person name="Madera M."/>
            <person name="Marchionni L."/>
            <person name="Matsuda H."/>
            <person name="Matsuzawa S."/>
            <person name="Miki H."/>
            <person name="Mignone F."/>
            <person name="Miyake S."/>
            <person name="Morris K."/>
            <person name="Mottagui-Tabar S."/>
            <person name="Mulder N."/>
            <person name="Nakano N."/>
            <person name="Nakauchi H."/>
            <person name="Ng P."/>
            <person name="Nilsson R."/>
            <person name="Nishiguchi S."/>
            <person name="Nishikawa S."/>
            <person name="Nori F."/>
            <person name="Ohara O."/>
            <person name="Okazaki Y."/>
            <person name="Orlando V."/>
            <person name="Pang K.C."/>
            <person name="Pavan W.J."/>
            <person name="Pavesi G."/>
            <person name="Pesole G."/>
            <person name="Petrovsky N."/>
            <person name="Piazza S."/>
            <person name="Reed J."/>
            <person name="Reid J.F."/>
            <person name="Ring B.Z."/>
            <person name="Ringwald M."/>
            <person name="Rost B."/>
            <person name="Ruan Y."/>
            <person name="Salzberg S.L."/>
            <person name="Sandelin A."/>
            <person name="Schneider C."/>
            <person name="Schoenbach C."/>
            <person name="Sekiguchi K."/>
            <person name="Semple C.A."/>
            <person name="Seno S."/>
            <person name="Sessa L."/>
            <person name="Sheng Y."/>
            <person name="Shibata Y."/>
            <person name="Shimada H."/>
            <person name="Shimada K."/>
            <person name="Silva D."/>
            <person name="Sinclair B."/>
            <person name="Sperling S."/>
            <person name="Stupka E."/>
            <person name="Sugiura K."/>
            <person name="Sultana R."/>
            <person name="Takenaka Y."/>
            <person name="Taki K."/>
            <person name="Tammoja K."/>
            <person name="Tan S.L."/>
            <person name="Tang S."/>
            <person name="Taylor M.S."/>
            <person name="Tegner J."/>
            <person name="Teichmann S.A."/>
            <person name="Ueda H.R."/>
            <person name="van Nimwegen E."/>
            <person name="Verardo R."/>
            <person name="Wei C.L."/>
            <person name="Yagi K."/>
            <person name="Yamanishi H."/>
            <person name="Zabarovsky E."/>
            <person name="Zhu S."/>
            <person name="Zimmer A."/>
            <person name="Hide W."/>
            <person name="Bult C."/>
            <person name="Grimmond S.M."/>
            <person name="Teasdale R.D."/>
            <person name="Liu E.T."/>
            <person name="Brusic V."/>
            <person name="Quackenbush J."/>
            <person name="Wahlestedt C."/>
            <person name="Mattick J.S."/>
            <person name="Hume D.A."/>
            <person name="Kai C."/>
            <person name="Sasaki D."/>
            <person name="Tomaru Y."/>
            <person name="Fukuda S."/>
            <person name="Kanamori-Katayama M."/>
            <person name="Suzuki M."/>
            <person name="Aoki J."/>
            <person name="Arakawa T."/>
            <person name="Iida J."/>
            <person name="Imamura K."/>
            <person name="Itoh M."/>
            <person name="Kato T."/>
            <person name="Kawaji H."/>
            <person name="Kawagashira N."/>
            <person name="Kawashima T."/>
            <person name="Kojima M."/>
            <person name="Kondo S."/>
            <person name="Konno H."/>
            <person name="Nakano K."/>
            <person name="Ninomiya N."/>
            <person name="Nishio T."/>
            <person name="Okada M."/>
            <person name="Plessy C."/>
            <person name="Shibata K."/>
            <person name="Shiraki T."/>
            <person name="Suzuki S."/>
            <person name="Tagami M."/>
            <person name="Waki K."/>
            <person name="Watahiki A."/>
            <person name="Okamura-Oho Y."/>
            <person name="Suzuki H."/>
            <person name="Kawai J."/>
            <person name="Hayashizaki Y."/>
        </authorList>
    </citation>
    <scope>NUCLEOTIDE SEQUENCE [LARGE SCALE MRNA]</scope>
    <source>
        <strain>C57BL/6J</strain>
        <tissue>Brain cortex</tissue>
        <tissue>Kidney</tissue>
    </source>
</reference>
<reference key="2">
    <citation type="journal article" date="2009" name="PLoS Biol.">
        <title>Lineage-specific biology revealed by a finished genome assembly of the mouse.</title>
        <authorList>
            <person name="Church D.M."/>
            <person name="Goodstadt L."/>
            <person name="Hillier L.W."/>
            <person name="Zody M.C."/>
            <person name="Goldstein S."/>
            <person name="She X."/>
            <person name="Bult C.J."/>
            <person name="Agarwala R."/>
            <person name="Cherry J.L."/>
            <person name="DiCuccio M."/>
            <person name="Hlavina W."/>
            <person name="Kapustin Y."/>
            <person name="Meric P."/>
            <person name="Maglott D."/>
            <person name="Birtle Z."/>
            <person name="Marques A.C."/>
            <person name="Graves T."/>
            <person name="Zhou S."/>
            <person name="Teague B."/>
            <person name="Potamousis K."/>
            <person name="Churas C."/>
            <person name="Place M."/>
            <person name="Herschleb J."/>
            <person name="Runnheim R."/>
            <person name="Forrest D."/>
            <person name="Amos-Landgraf J."/>
            <person name="Schwartz D.C."/>
            <person name="Cheng Z."/>
            <person name="Lindblad-Toh K."/>
            <person name="Eichler E.E."/>
            <person name="Ponting C.P."/>
        </authorList>
    </citation>
    <scope>NUCLEOTIDE SEQUENCE [LARGE SCALE GENOMIC DNA]</scope>
    <source>
        <strain>C57BL/6J</strain>
    </source>
</reference>
<reference key="3">
    <citation type="journal article" date="2004" name="Genome Res.">
        <title>The status, quality, and expansion of the NIH full-length cDNA project: the Mammalian Gene Collection (MGC).</title>
        <authorList>
            <consortium name="The MGC Project Team"/>
        </authorList>
    </citation>
    <scope>NUCLEOTIDE SEQUENCE [LARGE SCALE MRNA]</scope>
    <source>
        <tissue>Thymus</tissue>
    </source>
</reference>
<reference key="4">
    <citation type="journal article" date="2004" name="DNA Res.">
        <title>Prediction of the coding sequences of mouse homologues of KIAA gene: IV. The complete nucleotide sequences of 500 mouse KIAA-homologous cDNAs identified by screening of terminal sequences of cDNA clones randomly sampled from size-fractionated libraries.</title>
        <authorList>
            <person name="Okazaki N."/>
            <person name="Kikuno R."/>
            <person name="Ohara R."/>
            <person name="Inamoto S."/>
            <person name="Koseki H."/>
            <person name="Hiraoka S."/>
            <person name="Saga Y."/>
            <person name="Seino S."/>
            <person name="Nishimura M."/>
            <person name="Kaisho T."/>
            <person name="Hoshino K."/>
            <person name="Kitamura H."/>
            <person name="Nagase T."/>
            <person name="Ohara O."/>
            <person name="Koga H."/>
        </authorList>
    </citation>
    <scope>NUCLEOTIDE SEQUENCE [LARGE SCALE MRNA] OF 147-848</scope>
    <source>
        <tissue>Spleen</tissue>
    </source>
</reference>
<reference key="5">
    <citation type="journal article" date="2010" name="Cell">
        <title>A tissue-specific atlas of mouse protein phosphorylation and expression.</title>
        <authorList>
            <person name="Huttlin E.L."/>
            <person name="Jedrychowski M.P."/>
            <person name="Elias J.E."/>
            <person name="Goswami T."/>
            <person name="Rad R."/>
            <person name="Beausoleil S.A."/>
            <person name="Villen J."/>
            <person name="Haas W."/>
            <person name="Sowa M.E."/>
            <person name="Gygi S.P."/>
        </authorList>
    </citation>
    <scope>PHOSPHORYLATION [LARGE SCALE ANALYSIS] AT SER-455; SER-583 AND THR-586</scope>
    <scope>IDENTIFICATION BY MASS SPECTROMETRY [LARGE SCALE ANALYSIS]</scope>
    <source>
        <tissue>Brain</tissue>
        <tissue>Brown adipose tissue</tissue>
        <tissue>Heart</tissue>
        <tissue>Kidney</tissue>
        <tissue>Liver</tissue>
        <tissue>Lung</tissue>
        <tissue>Pancreas</tissue>
        <tissue>Spleen</tissue>
        <tissue>Testis</tissue>
    </source>
</reference>
<reference key="6">
    <citation type="journal article" date="2011" name="Eur. J. Neurosci.">
        <title>Freud-2/CC2D1B mediates dual repression of the serotonin-1A receptor gene.</title>
        <authorList>
            <person name="Hadjighassem M.R."/>
            <person name="Galaraga K."/>
            <person name="Albert P.R."/>
        </authorList>
    </citation>
    <scope>FUNCTION</scope>
    <scope>SUBCELLULAR LOCATION</scope>
</reference>
<name>C2D1B_MOUSE</name>
<evidence type="ECO:0000250" key="1">
    <source>
        <dbReference type="UniProtKB" id="Q5T0F9"/>
    </source>
</evidence>
<evidence type="ECO:0000255" key="2"/>
<evidence type="ECO:0000255" key="3">
    <source>
        <dbReference type="PROSITE-ProRule" id="PRU00041"/>
    </source>
</evidence>
<evidence type="ECO:0000256" key="4">
    <source>
        <dbReference type="SAM" id="MobiDB-lite"/>
    </source>
</evidence>
<evidence type="ECO:0000269" key="5">
    <source>
    </source>
</evidence>
<evidence type="ECO:0000305" key="6"/>
<evidence type="ECO:0007744" key="7">
    <source>
    </source>
</evidence>
<gene>
    <name type="primary">Cc2d1b</name>
    <name type="synonym">Kiaa1836</name>
</gene>
<proteinExistence type="evidence at protein level"/>
<organism>
    <name type="scientific">Mus musculus</name>
    <name type="common">Mouse</name>
    <dbReference type="NCBI Taxonomy" id="10090"/>
    <lineage>
        <taxon>Eukaryota</taxon>
        <taxon>Metazoa</taxon>
        <taxon>Chordata</taxon>
        <taxon>Craniata</taxon>
        <taxon>Vertebrata</taxon>
        <taxon>Euteleostomi</taxon>
        <taxon>Mammalia</taxon>
        <taxon>Eutheria</taxon>
        <taxon>Euarchontoglires</taxon>
        <taxon>Glires</taxon>
        <taxon>Rodentia</taxon>
        <taxon>Myomorpha</taxon>
        <taxon>Muroidea</taxon>
        <taxon>Muridae</taxon>
        <taxon>Murinae</taxon>
        <taxon>Mus</taxon>
        <taxon>Mus</taxon>
    </lineage>
</organism>
<protein>
    <recommendedName>
        <fullName>Coiled-coil and C2 domain-containing protein 1B</fullName>
    </recommendedName>
    <alternativeName>
        <fullName>Five prime repressor element under dual repression-binding protein 2</fullName>
        <shortName>FRE under dual repression-binding protein 2</shortName>
        <shortName>Freud-2</shortName>
    </alternativeName>
</protein>
<feature type="chain" id="PRO_0000288427" description="Coiled-coil and C2 domain-containing protein 1B">
    <location>
        <begin position="1"/>
        <end position="848"/>
    </location>
</feature>
<feature type="domain" description="C2" evidence="3">
    <location>
        <begin position="666"/>
        <end position="805"/>
    </location>
</feature>
<feature type="region of interest" description="Disordered" evidence="4">
    <location>
        <begin position="1"/>
        <end position="21"/>
    </location>
</feature>
<feature type="region of interest" description="Disordered" evidence="4">
    <location>
        <begin position="53"/>
        <end position="75"/>
    </location>
</feature>
<feature type="region of interest" description="Disordered" evidence="4">
    <location>
        <begin position="217"/>
        <end position="276"/>
    </location>
</feature>
<feature type="region of interest" description="Disordered" evidence="4">
    <location>
        <begin position="326"/>
        <end position="353"/>
    </location>
</feature>
<feature type="region of interest" description="Disordered" evidence="4">
    <location>
        <begin position="433"/>
        <end position="460"/>
    </location>
</feature>
<feature type="region of interest" description="Disordered" evidence="4">
    <location>
        <begin position="476"/>
        <end position="523"/>
    </location>
</feature>
<feature type="coiled-coil region" evidence="2">
    <location>
        <begin position="165"/>
        <end position="193"/>
    </location>
</feature>
<feature type="coiled-coil region" evidence="2">
    <location>
        <begin position="600"/>
        <end position="626"/>
    </location>
</feature>
<feature type="compositionally biased region" description="Basic residues" evidence="4">
    <location>
        <begin position="1"/>
        <end position="10"/>
    </location>
</feature>
<feature type="compositionally biased region" description="Pro residues" evidence="4">
    <location>
        <begin position="438"/>
        <end position="448"/>
    </location>
</feature>
<feature type="compositionally biased region" description="Acidic residues" evidence="4">
    <location>
        <begin position="476"/>
        <end position="485"/>
    </location>
</feature>
<feature type="compositionally biased region" description="Low complexity" evidence="4">
    <location>
        <begin position="487"/>
        <end position="498"/>
    </location>
</feature>
<feature type="compositionally biased region" description="Low complexity" evidence="4">
    <location>
        <begin position="509"/>
        <end position="522"/>
    </location>
</feature>
<feature type="modified residue" description="Phosphoserine" evidence="7">
    <location>
        <position position="455"/>
    </location>
</feature>
<feature type="modified residue" description="Phosphoserine" evidence="7">
    <location>
        <position position="583"/>
    </location>
</feature>
<feature type="modified residue" description="Phosphothreonine" evidence="7">
    <location>
        <position position="586"/>
    </location>
</feature>
<feature type="sequence conflict" description="In Ref. 1; BAE27295." evidence="6" ref="1">
    <original>L</original>
    <variation>F</variation>
    <location>
        <position position="25"/>
    </location>
</feature>
<feature type="sequence conflict" description="In Ref. 1; BAE27295." evidence="6" ref="1">
    <original>Q</original>
    <variation>L</variation>
    <location>
        <position position="388"/>
    </location>
</feature>
<sequence length="848" mass="93091">MPGPRPRKGPKTSGQGAETAKQLGLFVEFNPEDMLLGVDETEDDGDLEAELLALTGETASRSRKPAPKGQAPLPMAHIEKLAADCMRDVEEDEEEEGLEDDADLLTELQEVLGEDEEAGLLDGSEAASPDLCEEKTWDNTELPVEQAACQQAVPAAAQAGGPRGLQALLEERIRNYREAAASAKEAGEAAKARRCERGLKTLQSQLATVRKGGKICEDEIPPPVALGKRPPAPQERAIKNPEIDSPGPCAMEPGNLSQPESSLPAIAPLPDSDPDPQALLLARQREYKAAALDAKRAGDLDRARELMRIGKRFGTVLEALEKGQPVDLSGMPPAPADLKALPQASKASSATQGLSPAVEQMQPVMASDLPATPVAPAEPTTVLDALQQRLNKYREAGIQARANGDERKARMHDRIAKQYQDAVRAHQAGQKVDFAELPVPPGFPPIPGLEPRKGSEQDSVAATLATAQKLASEDAALVDDDEESDTPAQAPLAKKPAQTLVSPSHLLTEPKASSSKESLSPSVREQVTLLEARKLQYQRAALQAKRRQDLEQAKSHLRVAKSLEAQIIQARAGQPIDLSKVPSPLTDEEGDFILIHHEDLRLSQKAEEVYAQLQKMLQEQQAKCLLFSKQYMHQGNVAETTRFERLAEDRKKQLEILQLAQAQGLDPPSHHFELKTFQTVRIFSELNSTEMHLIIVRGMNLPAPPGVTPDDLDAFVRFEFHYPNSDQAQKSKTAVVKNTNSPEFEQVFKLNINRNHRGFRRVIQSKGIKFEIFHKGSFFRSDKLVGTAHLKLERLEKECEIREIMEVLDGRKPTGGKLEVKVRLREPLSSQDVQTVTENWLVLEPRGL</sequence>
<keyword id="KW-0175">Coiled coil</keyword>
<keyword id="KW-0539">Nucleus</keyword>
<keyword id="KW-0597">Phosphoprotein</keyword>
<keyword id="KW-1185">Reference proteome</keyword>
<keyword id="KW-0804">Transcription</keyword>
<keyword id="KW-0805">Transcription regulation</keyword>
<accession>Q8BRN9</accession>
<accession>B2RQ40</accession>
<accession>Q3UJ60</accession>
<accession>Q69Z95</accession>